<evidence type="ECO:0000255" key="1">
    <source>
        <dbReference type="HAMAP-Rule" id="MF_01227"/>
    </source>
</evidence>
<feature type="chain" id="PRO_0000266214" description="CTP synthase">
    <location>
        <begin position="1"/>
        <end position="546"/>
    </location>
</feature>
<feature type="domain" description="Glutamine amidotransferase type-1" evidence="1">
    <location>
        <begin position="291"/>
        <end position="542"/>
    </location>
</feature>
<feature type="region of interest" description="Amidoligase domain" evidence="1">
    <location>
        <begin position="1"/>
        <end position="266"/>
    </location>
</feature>
<feature type="active site" description="Nucleophile; for glutamine hydrolysis" evidence="1">
    <location>
        <position position="379"/>
    </location>
</feature>
<feature type="active site" evidence="1">
    <location>
        <position position="515"/>
    </location>
</feature>
<feature type="active site" evidence="1">
    <location>
        <position position="517"/>
    </location>
</feature>
<feature type="binding site" evidence="1">
    <location>
        <position position="14"/>
    </location>
    <ligand>
        <name>CTP</name>
        <dbReference type="ChEBI" id="CHEBI:37563"/>
        <note>allosteric inhibitor</note>
    </ligand>
</feature>
<feature type="binding site" evidence="1">
    <location>
        <position position="14"/>
    </location>
    <ligand>
        <name>UTP</name>
        <dbReference type="ChEBI" id="CHEBI:46398"/>
    </ligand>
</feature>
<feature type="binding site" evidence="1">
    <location>
        <begin position="15"/>
        <end position="20"/>
    </location>
    <ligand>
        <name>ATP</name>
        <dbReference type="ChEBI" id="CHEBI:30616"/>
    </ligand>
</feature>
<feature type="binding site" evidence="1">
    <location>
        <position position="72"/>
    </location>
    <ligand>
        <name>ATP</name>
        <dbReference type="ChEBI" id="CHEBI:30616"/>
    </ligand>
</feature>
<feature type="binding site" evidence="1">
    <location>
        <position position="72"/>
    </location>
    <ligand>
        <name>Mg(2+)</name>
        <dbReference type="ChEBI" id="CHEBI:18420"/>
    </ligand>
</feature>
<feature type="binding site" evidence="1">
    <location>
        <position position="140"/>
    </location>
    <ligand>
        <name>Mg(2+)</name>
        <dbReference type="ChEBI" id="CHEBI:18420"/>
    </ligand>
</feature>
<feature type="binding site" evidence="1">
    <location>
        <begin position="147"/>
        <end position="149"/>
    </location>
    <ligand>
        <name>CTP</name>
        <dbReference type="ChEBI" id="CHEBI:37563"/>
        <note>allosteric inhibitor</note>
    </ligand>
</feature>
<feature type="binding site" evidence="1">
    <location>
        <begin position="187"/>
        <end position="192"/>
    </location>
    <ligand>
        <name>CTP</name>
        <dbReference type="ChEBI" id="CHEBI:37563"/>
        <note>allosteric inhibitor</note>
    </ligand>
</feature>
<feature type="binding site" evidence="1">
    <location>
        <begin position="187"/>
        <end position="192"/>
    </location>
    <ligand>
        <name>UTP</name>
        <dbReference type="ChEBI" id="CHEBI:46398"/>
    </ligand>
</feature>
<feature type="binding site" evidence="1">
    <location>
        <position position="223"/>
    </location>
    <ligand>
        <name>CTP</name>
        <dbReference type="ChEBI" id="CHEBI:37563"/>
        <note>allosteric inhibitor</note>
    </ligand>
</feature>
<feature type="binding site" evidence="1">
    <location>
        <position position="223"/>
    </location>
    <ligand>
        <name>UTP</name>
        <dbReference type="ChEBI" id="CHEBI:46398"/>
    </ligand>
</feature>
<feature type="binding site" evidence="1">
    <location>
        <begin position="239"/>
        <end position="241"/>
    </location>
    <ligand>
        <name>ATP</name>
        <dbReference type="ChEBI" id="CHEBI:30616"/>
    </ligand>
</feature>
<feature type="binding site" evidence="1">
    <location>
        <position position="352"/>
    </location>
    <ligand>
        <name>L-glutamine</name>
        <dbReference type="ChEBI" id="CHEBI:58359"/>
    </ligand>
</feature>
<feature type="binding site" evidence="1">
    <location>
        <begin position="380"/>
        <end position="383"/>
    </location>
    <ligand>
        <name>L-glutamine</name>
        <dbReference type="ChEBI" id="CHEBI:58359"/>
    </ligand>
</feature>
<feature type="binding site" evidence="1">
    <location>
        <position position="403"/>
    </location>
    <ligand>
        <name>L-glutamine</name>
        <dbReference type="ChEBI" id="CHEBI:58359"/>
    </ligand>
</feature>
<feature type="binding site" evidence="1">
    <location>
        <position position="470"/>
    </location>
    <ligand>
        <name>L-glutamine</name>
        <dbReference type="ChEBI" id="CHEBI:58359"/>
    </ligand>
</feature>
<comment type="function">
    <text evidence="1">Catalyzes the ATP-dependent amination of UTP to CTP with either L-glutamine or ammonia as the source of nitrogen. Regulates intracellular CTP levels through interactions with the four ribonucleotide triphosphates.</text>
</comment>
<comment type="catalytic activity">
    <reaction evidence="1">
        <text>UTP + L-glutamine + ATP + H2O = CTP + L-glutamate + ADP + phosphate + 2 H(+)</text>
        <dbReference type="Rhea" id="RHEA:26426"/>
        <dbReference type="ChEBI" id="CHEBI:15377"/>
        <dbReference type="ChEBI" id="CHEBI:15378"/>
        <dbReference type="ChEBI" id="CHEBI:29985"/>
        <dbReference type="ChEBI" id="CHEBI:30616"/>
        <dbReference type="ChEBI" id="CHEBI:37563"/>
        <dbReference type="ChEBI" id="CHEBI:43474"/>
        <dbReference type="ChEBI" id="CHEBI:46398"/>
        <dbReference type="ChEBI" id="CHEBI:58359"/>
        <dbReference type="ChEBI" id="CHEBI:456216"/>
        <dbReference type="EC" id="6.3.4.2"/>
    </reaction>
</comment>
<comment type="catalytic activity">
    <reaction evidence="1">
        <text>L-glutamine + H2O = L-glutamate + NH4(+)</text>
        <dbReference type="Rhea" id="RHEA:15889"/>
        <dbReference type="ChEBI" id="CHEBI:15377"/>
        <dbReference type="ChEBI" id="CHEBI:28938"/>
        <dbReference type="ChEBI" id="CHEBI:29985"/>
        <dbReference type="ChEBI" id="CHEBI:58359"/>
    </reaction>
</comment>
<comment type="catalytic activity">
    <reaction evidence="1">
        <text>UTP + NH4(+) + ATP = CTP + ADP + phosphate + 2 H(+)</text>
        <dbReference type="Rhea" id="RHEA:16597"/>
        <dbReference type="ChEBI" id="CHEBI:15378"/>
        <dbReference type="ChEBI" id="CHEBI:28938"/>
        <dbReference type="ChEBI" id="CHEBI:30616"/>
        <dbReference type="ChEBI" id="CHEBI:37563"/>
        <dbReference type="ChEBI" id="CHEBI:43474"/>
        <dbReference type="ChEBI" id="CHEBI:46398"/>
        <dbReference type="ChEBI" id="CHEBI:456216"/>
    </reaction>
</comment>
<comment type="activity regulation">
    <text evidence="1">Allosterically activated by GTP, when glutamine is the substrate; GTP has no effect on the reaction when ammonia is the substrate. The allosteric effector GTP functions by stabilizing the protein conformation that binds the tetrahedral intermediate(s) formed during glutamine hydrolysis. Inhibited by the product CTP, via allosteric rather than competitive inhibition.</text>
</comment>
<comment type="pathway">
    <text evidence="1">Pyrimidine metabolism; CTP biosynthesis via de novo pathway; CTP from UDP: step 2/2.</text>
</comment>
<comment type="subunit">
    <text evidence="1">Homotetramer.</text>
</comment>
<comment type="miscellaneous">
    <text evidence="1">CTPSs have evolved a hybrid strategy for distinguishing between UTP and CTP. The overlapping regions of the product feedback inhibitory and substrate sites recognize a common feature in both compounds, the triphosphate moiety. To differentiate isosteric substrate and product pyrimidine rings, an additional pocket far from the expected kinase/ligase catalytic site, specifically recognizes the cytosine and ribose portions of the product inhibitor.</text>
</comment>
<comment type="similarity">
    <text evidence="1">Belongs to the CTP synthase family.</text>
</comment>
<proteinExistence type="inferred from homology"/>
<keyword id="KW-0067">ATP-binding</keyword>
<keyword id="KW-0315">Glutamine amidotransferase</keyword>
<keyword id="KW-0436">Ligase</keyword>
<keyword id="KW-0460">Magnesium</keyword>
<keyword id="KW-0479">Metal-binding</keyword>
<keyword id="KW-0547">Nucleotide-binding</keyword>
<keyword id="KW-0665">Pyrimidine biosynthesis</keyword>
<keyword id="KW-1185">Reference proteome</keyword>
<gene>
    <name evidence="1" type="primary">pyrG</name>
    <name type="ordered locus">SO_3441</name>
</gene>
<sequence length="546" mass="60149">MTTRYIFVTGGVVSSLGKGIAAASLAAILEARGLNVTIMKLDPYINVDPGTMSPTQHGEVFVTEDGAETDLDLGHYERFIRTKMNRRNNFTTGRIYEEVLRKERRGDYLGATIQVIPHITNAIKEKVLAGGEGHDVAIVEIGGTVGDIESLPFLESIRQLGVELGRDRTLFMHLTLVPFLGAAGEVKTKPTQHSVKELRSIGIAPDVLICRGDRAIPANERAKISLFCNVEERAVISLKDVDSIYKIPALLRSQGLDELVVKRFSLTCREADLSEWENVIYQEANPNGEVVIGMVGKYIELPDAYKSVNEALKHAGLKNRVSVTIKYIDSQTVEAKGDEVLQGLDGILVPGGFGERGVEGKILAAKFARENNLPYFGICLGMQVALIEFARNVAGMADAHSTEFNKATPFPVVGLITEWVDEEGNVEQRHEASDLGGTMRLGAQLCHLLEGSKAAQAYKGNSCVERHRHRYEVNNKYKERLEQAGLVFSGLSSDRKLVEMIELKDHPWFVAGQFHPEFTSTPRDGHPLFEGFVAAASAHQKRDLKK</sequence>
<reference key="1">
    <citation type="journal article" date="2002" name="Nat. Biotechnol.">
        <title>Genome sequence of the dissimilatory metal ion-reducing bacterium Shewanella oneidensis.</title>
        <authorList>
            <person name="Heidelberg J.F."/>
            <person name="Paulsen I.T."/>
            <person name="Nelson K.E."/>
            <person name="Gaidos E.J."/>
            <person name="Nelson W.C."/>
            <person name="Read T.D."/>
            <person name="Eisen J.A."/>
            <person name="Seshadri R."/>
            <person name="Ward N.L."/>
            <person name="Methe B.A."/>
            <person name="Clayton R.A."/>
            <person name="Meyer T."/>
            <person name="Tsapin A."/>
            <person name="Scott J."/>
            <person name="Beanan M.J."/>
            <person name="Brinkac L.M."/>
            <person name="Daugherty S.C."/>
            <person name="DeBoy R.T."/>
            <person name="Dodson R.J."/>
            <person name="Durkin A.S."/>
            <person name="Haft D.H."/>
            <person name="Kolonay J.F."/>
            <person name="Madupu R."/>
            <person name="Peterson J.D."/>
            <person name="Umayam L.A."/>
            <person name="White O."/>
            <person name="Wolf A.M."/>
            <person name="Vamathevan J.J."/>
            <person name="Weidman J.F."/>
            <person name="Impraim M."/>
            <person name="Lee K."/>
            <person name="Berry K.J."/>
            <person name="Lee C."/>
            <person name="Mueller J."/>
            <person name="Khouri H.M."/>
            <person name="Gill J."/>
            <person name="Utterback T.R."/>
            <person name="McDonald L.A."/>
            <person name="Feldblyum T.V."/>
            <person name="Smith H.O."/>
            <person name="Venter J.C."/>
            <person name="Nealson K.H."/>
            <person name="Fraser C.M."/>
        </authorList>
    </citation>
    <scope>NUCLEOTIDE SEQUENCE [LARGE SCALE GENOMIC DNA]</scope>
    <source>
        <strain>ATCC 700550 / JCM 31522 / CIP 106686 / LMG 19005 / NCIMB 14063 / MR-1</strain>
    </source>
</reference>
<accession>Q8EBQ9</accession>
<name>PYRG_SHEON</name>
<protein>
    <recommendedName>
        <fullName evidence="1">CTP synthase</fullName>
        <ecNumber evidence="1">6.3.4.2</ecNumber>
    </recommendedName>
    <alternativeName>
        <fullName evidence="1">Cytidine 5'-triphosphate synthase</fullName>
    </alternativeName>
    <alternativeName>
        <fullName evidence="1">Cytidine triphosphate synthetase</fullName>
        <shortName evidence="1">CTP synthetase</shortName>
        <shortName evidence="1">CTPS</shortName>
    </alternativeName>
    <alternativeName>
        <fullName evidence="1">UTP--ammonia ligase</fullName>
    </alternativeName>
</protein>
<dbReference type="EC" id="6.3.4.2" evidence="1"/>
<dbReference type="EMBL" id="AE014299">
    <property type="protein sequence ID" value="AAN56438.1"/>
    <property type="molecule type" value="Genomic_DNA"/>
</dbReference>
<dbReference type="RefSeq" id="NP_718994.1">
    <property type="nucleotide sequence ID" value="NC_004347.2"/>
</dbReference>
<dbReference type="RefSeq" id="WP_011073297.1">
    <property type="nucleotide sequence ID" value="NC_004347.2"/>
</dbReference>
<dbReference type="SMR" id="Q8EBQ9"/>
<dbReference type="STRING" id="211586.SO_3441"/>
<dbReference type="PaxDb" id="211586-SO_3441"/>
<dbReference type="KEGG" id="son:SO_3441"/>
<dbReference type="PATRIC" id="fig|211586.12.peg.3336"/>
<dbReference type="eggNOG" id="COG0504">
    <property type="taxonomic scope" value="Bacteria"/>
</dbReference>
<dbReference type="HOGENOM" id="CLU_011675_5_0_6"/>
<dbReference type="OrthoDB" id="9801107at2"/>
<dbReference type="PhylomeDB" id="Q8EBQ9"/>
<dbReference type="BioCyc" id="SONE211586:G1GMP-3212-MONOMER"/>
<dbReference type="UniPathway" id="UPA00159">
    <property type="reaction ID" value="UER00277"/>
</dbReference>
<dbReference type="Proteomes" id="UP000008186">
    <property type="component" value="Chromosome"/>
</dbReference>
<dbReference type="GO" id="GO:0005829">
    <property type="term" value="C:cytosol"/>
    <property type="evidence" value="ECO:0000318"/>
    <property type="project" value="GO_Central"/>
</dbReference>
<dbReference type="GO" id="GO:0005524">
    <property type="term" value="F:ATP binding"/>
    <property type="evidence" value="ECO:0007669"/>
    <property type="project" value="UniProtKB-KW"/>
</dbReference>
<dbReference type="GO" id="GO:0003883">
    <property type="term" value="F:CTP synthase activity"/>
    <property type="evidence" value="ECO:0000318"/>
    <property type="project" value="GO_Central"/>
</dbReference>
<dbReference type="GO" id="GO:0004359">
    <property type="term" value="F:glutaminase activity"/>
    <property type="evidence" value="ECO:0007669"/>
    <property type="project" value="RHEA"/>
</dbReference>
<dbReference type="GO" id="GO:0042802">
    <property type="term" value="F:identical protein binding"/>
    <property type="evidence" value="ECO:0000318"/>
    <property type="project" value="GO_Central"/>
</dbReference>
<dbReference type="GO" id="GO:0046872">
    <property type="term" value="F:metal ion binding"/>
    <property type="evidence" value="ECO:0007669"/>
    <property type="project" value="UniProtKB-KW"/>
</dbReference>
<dbReference type="GO" id="GO:0044210">
    <property type="term" value="P:'de novo' CTP biosynthetic process"/>
    <property type="evidence" value="ECO:0007669"/>
    <property type="project" value="UniProtKB-UniRule"/>
</dbReference>
<dbReference type="GO" id="GO:0006241">
    <property type="term" value="P:CTP biosynthetic process"/>
    <property type="evidence" value="ECO:0000318"/>
    <property type="project" value="GO_Central"/>
</dbReference>
<dbReference type="GO" id="GO:0019856">
    <property type="term" value="P:pyrimidine nucleobase biosynthetic process"/>
    <property type="evidence" value="ECO:0000318"/>
    <property type="project" value="GO_Central"/>
</dbReference>
<dbReference type="CDD" id="cd03113">
    <property type="entry name" value="CTPS_N"/>
    <property type="match status" value="1"/>
</dbReference>
<dbReference type="CDD" id="cd01746">
    <property type="entry name" value="GATase1_CTP_Synthase"/>
    <property type="match status" value="1"/>
</dbReference>
<dbReference type="FunFam" id="3.40.50.300:FF:000009">
    <property type="entry name" value="CTP synthase"/>
    <property type="match status" value="1"/>
</dbReference>
<dbReference type="FunFam" id="3.40.50.880:FF:000002">
    <property type="entry name" value="CTP synthase"/>
    <property type="match status" value="1"/>
</dbReference>
<dbReference type="Gene3D" id="3.40.50.880">
    <property type="match status" value="1"/>
</dbReference>
<dbReference type="Gene3D" id="3.40.50.300">
    <property type="entry name" value="P-loop containing nucleotide triphosphate hydrolases"/>
    <property type="match status" value="1"/>
</dbReference>
<dbReference type="HAMAP" id="MF_01227">
    <property type="entry name" value="PyrG"/>
    <property type="match status" value="1"/>
</dbReference>
<dbReference type="InterPro" id="IPR029062">
    <property type="entry name" value="Class_I_gatase-like"/>
</dbReference>
<dbReference type="InterPro" id="IPR004468">
    <property type="entry name" value="CTP_synthase"/>
</dbReference>
<dbReference type="InterPro" id="IPR017456">
    <property type="entry name" value="CTP_synthase_N"/>
</dbReference>
<dbReference type="InterPro" id="IPR017926">
    <property type="entry name" value="GATASE"/>
</dbReference>
<dbReference type="InterPro" id="IPR033828">
    <property type="entry name" value="GATase1_CTP_Synthase"/>
</dbReference>
<dbReference type="InterPro" id="IPR027417">
    <property type="entry name" value="P-loop_NTPase"/>
</dbReference>
<dbReference type="NCBIfam" id="NF003792">
    <property type="entry name" value="PRK05380.1"/>
    <property type="match status" value="1"/>
</dbReference>
<dbReference type="NCBIfam" id="TIGR00337">
    <property type="entry name" value="PyrG"/>
    <property type="match status" value="1"/>
</dbReference>
<dbReference type="PANTHER" id="PTHR11550">
    <property type="entry name" value="CTP SYNTHASE"/>
    <property type="match status" value="1"/>
</dbReference>
<dbReference type="PANTHER" id="PTHR11550:SF0">
    <property type="entry name" value="CTP SYNTHASE-RELATED"/>
    <property type="match status" value="1"/>
</dbReference>
<dbReference type="Pfam" id="PF06418">
    <property type="entry name" value="CTP_synth_N"/>
    <property type="match status" value="1"/>
</dbReference>
<dbReference type="Pfam" id="PF00117">
    <property type="entry name" value="GATase"/>
    <property type="match status" value="1"/>
</dbReference>
<dbReference type="SUPFAM" id="SSF52317">
    <property type="entry name" value="Class I glutamine amidotransferase-like"/>
    <property type="match status" value="1"/>
</dbReference>
<dbReference type="SUPFAM" id="SSF52540">
    <property type="entry name" value="P-loop containing nucleoside triphosphate hydrolases"/>
    <property type="match status" value="1"/>
</dbReference>
<dbReference type="PROSITE" id="PS51273">
    <property type="entry name" value="GATASE_TYPE_1"/>
    <property type="match status" value="1"/>
</dbReference>
<organism>
    <name type="scientific">Shewanella oneidensis (strain ATCC 700550 / JCM 31522 / CIP 106686 / LMG 19005 / NCIMB 14063 / MR-1)</name>
    <dbReference type="NCBI Taxonomy" id="211586"/>
    <lineage>
        <taxon>Bacteria</taxon>
        <taxon>Pseudomonadati</taxon>
        <taxon>Pseudomonadota</taxon>
        <taxon>Gammaproteobacteria</taxon>
        <taxon>Alteromonadales</taxon>
        <taxon>Shewanellaceae</taxon>
        <taxon>Shewanella</taxon>
    </lineage>
</organism>